<sequence length="194" mass="21093">MDEDGLPLMGSGIDLTKVPAIQQKRTVAFLNQFVVHTVQFLNRFSAVCEEKLADLSLRIQQIETTLNILDAKLSSIPGLEDVTVEVSPLNVTAVTNGSHSETTSEQTQQNSTQDSGAQESEAPSENVLTVAKDPRYARYLKMVQVGVPVMAIRDKMISEGLDPELLEKPDAPVPNGESERAVEESSDSDSSFSD</sequence>
<accession>Q9CR27</accession>
<accession>Q8K2X5</accession>
<accession>Q9D0Y7</accession>
<gene>
    <name evidence="5" type="primary">Washc3</name>
    <name type="synonym">Ccdc53</name>
</gene>
<comment type="function">
    <text evidence="1">Acts as a component of the WASH core complex that functions as a nucleation-promoting factor (NPF) at the surface of endosomes, where it recruits and activates the Arp2/3 complex to induce actin polymerization, playing a key role in the fission of tubules that serve as transport intermediates during endosome sortingg.</text>
</comment>
<comment type="subunit">
    <text evidence="1">Component of the WASH core complex also described as WASH regulatory complex (SHRC) composed of WASHC1, WASHC2, WASHC3, WASHC4 and WASHC5. The WASH core complex associates via WASHC2 with the F-actin-capping protein dimer (formed by CAPZA1, CAPZA2 or CAPZA3 and CAPZB) in a transient or substoichiometric manner which was initially described as WASH complex.</text>
</comment>
<comment type="subcellular location">
    <subcellularLocation>
        <location evidence="4">Early endosome</location>
    </subcellularLocation>
</comment>
<comment type="similarity">
    <text evidence="4">Belongs to the CCDC53 family.</text>
</comment>
<feature type="chain" id="PRO_0000076202" description="WASH complex subunit 3">
    <location>
        <begin position="1"/>
        <end position="194"/>
    </location>
</feature>
<feature type="region of interest" description="Disordered" evidence="3">
    <location>
        <begin position="94"/>
        <end position="126"/>
    </location>
</feature>
<feature type="region of interest" description="Disordered" evidence="3">
    <location>
        <begin position="158"/>
        <end position="194"/>
    </location>
</feature>
<feature type="coiled-coil region" evidence="2">
    <location>
        <begin position="46"/>
        <end position="74"/>
    </location>
</feature>
<feature type="compositionally biased region" description="Low complexity" evidence="3">
    <location>
        <begin position="98"/>
        <end position="113"/>
    </location>
</feature>
<feature type="compositionally biased region" description="Polar residues" evidence="3">
    <location>
        <begin position="114"/>
        <end position="126"/>
    </location>
</feature>
<feature type="modified residue" description="N-acetylmethionine" evidence="1">
    <location>
        <position position="1"/>
    </location>
</feature>
<feature type="sequence conflict" description="In Ref. 2; AAH29256." evidence="4" ref="2">
    <original>L</original>
    <variation>R</variation>
    <location>
        <position position="140"/>
    </location>
</feature>
<feature type="sequence conflict" description="In Ref. 1; BAB23220." evidence="4" ref="1">
    <original>R</original>
    <variation>G</variation>
    <location>
        <position position="153"/>
    </location>
</feature>
<feature type="sequence conflict" description="In Ref. 2; AAH29256." evidence="4" ref="2">
    <original>E</original>
    <variation>K</variation>
    <location>
        <position position="179"/>
    </location>
</feature>
<name>WASC3_MOUSE</name>
<evidence type="ECO:0000250" key="1">
    <source>
        <dbReference type="UniProtKB" id="Q9Y3C0"/>
    </source>
</evidence>
<evidence type="ECO:0000255" key="2"/>
<evidence type="ECO:0000256" key="3">
    <source>
        <dbReference type="SAM" id="MobiDB-lite"/>
    </source>
</evidence>
<evidence type="ECO:0000305" key="4"/>
<evidence type="ECO:0000312" key="5">
    <source>
        <dbReference type="MGI" id="MGI:1914532"/>
    </source>
</evidence>
<protein>
    <recommendedName>
        <fullName evidence="5">WASH complex subunit 3</fullName>
    </recommendedName>
    <alternativeName>
        <fullName>Coiled-coil domain-containing protein 53</fullName>
    </alternativeName>
</protein>
<keyword id="KW-0007">Acetylation</keyword>
<keyword id="KW-0175">Coiled coil</keyword>
<keyword id="KW-0967">Endosome</keyword>
<keyword id="KW-0653">Protein transport</keyword>
<keyword id="KW-1185">Reference proteome</keyword>
<keyword id="KW-0813">Transport</keyword>
<dbReference type="EMBL" id="AK004206">
    <property type="protein sequence ID" value="BAB23220.1"/>
    <property type="molecule type" value="mRNA"/>
</dbReference>
<dbReference type="EMBL" id="AK009358">
    <property type="protein sequence ID" value="BAB26239.1"/>
    <property type="molecule type" value="mRNA"/>
</dbReference>
<dbReference type="EMBL" id="AK013835">
    <property type="protein sequence ID" value="BAB29011.1"/>
    <property type="molecule type" value="mRNA"/>
</dbReference>
<dbReference type="EMBL" id="AK158822">
    <property type="protein sequence ID" value="BAE34682.1"/>
    <property type="molecule type" value="mRNA"/>
</dbReference>
<dbReference type="EMBL" id="BC029256">
    <property type="protein sequence ID" value="AAH29256.1"/>
    <property type="molecule type" value="mRNA"/>
</dbReference>
<dbReference type="CCDS" id="CCDS24108.1"/>
<dbReference type="RefSeq" id="NP_001116432.1">
    <property type="nucleotide sequence ID" value="NM_001122960.1"/>
</dbReference>
<dbReference type="RefSeq" id="NP_080346.1">
    <property type="nucleotide sequence ID" value="NM_026070.4"/>
</dbReference>
<dbReference type="RefSeq" id="NP_081763.1">
    <property type="nucleotide sequence ID" value="NM_027487.1"/>
</dbReference>
<dbReference type="SMR" id="Q9CR27"/>
<dbReference type="BioGRID" id="212071">
    <property type="interactions" value="1"/>
</dbReference>
<dbReference type="ComplexPortal" id="CPX-1177">
    <property type="entry name" value="WASH complex, variant WASHC1/WASHC2"/>
</dbReference>
<dbReference type="FunCoup" id="Q9CR27">
    <property type="interactions" value="1136"/>
</dbReference>
<dbReference type="IntAct" id="Q9CR27">
    <property type="interactions" value="2"/>
</dbReference>
<dbReference type="MINT" id="Q9CR27"/>
<dbReference type="STRING" id="10090.ENSMUSP00000020248"/>
<dbReference type="iPTMnet" id="Q9CR27"/>
<dbReference type="PhosphoSitePlus" id="Q9CR27"/>
<dbReference type="PaxDb" id="10090-ENSMUSP00000020248"/>
<dbReference type="PeptideAtlas" id="Q9CR27"/>
<dbReference type="ProteomicsDB" id="297841"/>
<dbReference type="Pumba" id="Q9CR27"/>
<dbReference type="Antibodypedia" id="49055">
    <property type="antibodies" value="49 antibodies from 15 providers"/>
</dbReference>
<dbReference type="DNASU" id="67282"/>
<dbReference type="Ensembl" id="ENSMUST00000020248.16">
    <property type="protein sequence ID" value="ENSMUSP00000020248.9"/>
    <property type="gene ID" value="ENSMUSG00000020056.17"/>
</dbReference>
<dbReference type="GeneID" id="67282"/>
<dbReference type="KEGG" id="mmu:67282"/>
<dbReference type="UCSC" id="uc007grh.2">
    <property type="organism name" value="mouse"/>
</dbReference>
<dbReference type="AGR" id="MGI:1914532"/>
<dbReference type="CTD" id="51019"/>
<dbReference type="MGI" id="MGI:1914532">
    <property type="gene designation" value="Washc3"/>
</dbReference>
<dbReference type="VEuPathDB" id="HostDB:ENSMUSG00000020056"/>
<dbReference type="eggNOG" id="KOG4496">
    <property type="taxonomic scope" value="Eukaryota"/>
</dbReference>
<dbReference type="GeneTree" id="ENSGT00390000014084"/>
<dbReference type="InParanoid" id="Q9CR27"/>
<dbReference type="OMA" id="GCETKFV"/>
<dbReference type="OrthoDB" id="268027at2759"/>
<dbReference type="PhylomeDB" id="Q9CR27"/>
<dbReference type="TreeFam" id="TF318955"/>
<dbReference type="BioGRID-ORCS" id="67282">
    <property type="hits" value="3 hits in 74 CRISPR screens"/>
</dbReference>
<dbReference type="ChiTaRS" id="Ccdc53">
    <property type="organism name" value="mouse"/>
</dbReference>
<dbReference type="PRO" id="PR:Q9CR27"/>
<dbReference type="Proteomes" id="UP000000589">
    <property type="component" value="Chromosome 10"/>
</dbReference>
<dbReference type="RNAct" id="Q9CR27">
    <property type="molecule type" value="protein"/>
</dbReference>
<dbReference type="Bgee" id="ENSMUSG00000020056">
    <property type="expression patterns" value="Expressed in lens of camera-type eye and 274 other cell types or tissues"/>
</dbReference>
<dbReference type="ExpressionAtlas" id="Q9CR27">
    <property type="expression patterns" value="baseline and differential"/>
</dbReference>
<dbReference type="GO" id="GO:0031901">
    <property type="term" value="C:early endosome membrane"/>
    <property type="evidence" value="ECO:0000303"/>
    <property type="project" value="ComplexPortal"/>
</dbReference>
<dbReference type="GO" id="GO:0071203">
    <property type="term" value="C:WASH complex"/>
    <property type="evidence" value="ECO:0000314"/>
    <property type="project" value="MGI"/>
</dbReference>
<dbReference type="GO" id="GO:0016197">
    <property type="term" value="P:endosomal transport"/>
    <property type="evidence" value="ECO:0000303"/>
    <property type="project" value="ComplexPortal"/>
</dbReference>
<dbReference type="GO" id="GO:0015031">
    <property type="term" value="P:protein transport"/>
    <property type="evidence" value="ECO:0007669"/>
    <property type="project" value="UniProtKB-KW"/>
</dbReference>
<dbReference type="GO" id="GO:0034315">
    <property type="term" value="P:regulation of Arp2/3 complex-mediated actin nucleation"/>
    <property type="evidence" value="ECO:0000303"/>
    <property type="project" value="ComplexPortal"/>
</dbReference>
<dbReference type="FunFam" id="1.20.5.110:FF:000025">
    <property type="entry name" value="Putative WASH complex subunit CCDC53"/>
    <property type="match status" value="1"/>
</dbReference>
<dbReference type="Gene3D" id="1.20.5.110">
    <property type="match status" value="1"/>
</dbReference>
<dbReference type="InterPro" id="IPR019309">
    <property type="entry name" value="WASHC3"/>
</dbReference>
<dbReference type="PANTHER" id="PTHR13015">
    <property type="entry name" value="PROTEIN AD-016-RELATED"/>
    <property type="match status" value="1"/>
</dbReference>
<dbReference type="PANTHER" id="PTHR13015:SF0">
    <property type="entry name" value="WASH COMPLEX SUBUNIT 3"/>
    <property type="match status" value="1"/>
</dbReference>
<dbReference type="Pfam" id="PF10152">
    <property type="entry name" value="CCDC53"/>
    <property type="match status" value="1"/>
</dbReference>
<proteinExistence type="evidence at protein level"/>
<reference key="1">
    <citation type="journal article" date="2005" name="Science">
        <title>The transcriptional landscape of the mammalian genome.</title>
        <authorList>
            <person name="Carninci P."/>
            <person name="Kasukawa T."/>
            <person name="Katayama S."/>
            <person name="Gough J."/>
            <person name="Frith M.C."/>
            <person name="Maeda N."/>
            <person name="Oyama R."/>
            <person name="Ravasi T."/>
            <person name="Lenhard B."/>
            <person name="Wells C."/>
            <person name="Kodzius R."/>
            <person name="Shimokawa K."/>
            <person name="Bajic V.B."/>
            <person name="Brenner S.E."/>
            <person name="Batalov S."/>
            <person name="Forrest A.R."/>
            <person name="Zavolan M."/>
            <person name="Davis M.J."/>
            <person name="Wilming L.G."/>
            <person name="Aidinis V."/>
            <person name="Allen J.E."/>
            <person name="Ambesi-Impiombato A."/>
            <person name="Apweiler R."/>
            <person name="Aturaliya R.N."/>
            <person name="Bailey T.L."/>
            <person name="Bansal M."/>
            <person name="Baxter L."/>
            <person name="Beisel K.W."/>
            <person name="Bersano T."/>
            <person name="Bono H."/>
            <person name="Chalk A.M."/>
            <person name="Chiu K.P."/>
            <person name="Choudhary V."/>
            <person name="Christoffels A."/>
            <person name="Clutterbuck D.R."/>
            <person name="Crowe M.L."/>
            <person name="Dalla E."/>
            <person name="Dalrymple B.P."/>
            <person name="de Bono B."/>
            <person name="Della Gatta G."/>
            <person name="di Bernardo D."/>
            <person name="Down T."/>
            <person name="Engstrom P."/>
            <person name="Fagiolini M."/>
            <person name="Faulkner G."/>
            <person name="Fletcher C.F."/>
            <person name="Fukushima T."/>
            <person name="Furuno M."/>
            <person name="Futaki S."/>
            <person name="Gariboldi M."/>
            <person name="Georgii-Hemming P."/>
            <person name="Gingeras T.R."/>
            <person name="Gojobori T."/>
            <person name="Green R.E."/>
            <person name="Gustincich S."/>
            <person name="Harbers M."/>
            <person name="Hayashi Y."/>
            <person name="Hensch T.K."/>
            <person name="Hirokawa N."/>
            <person name="Hill D."/>
            <person name="Huminiecki L."/>
            <person name="Iacono M."/>
            <person name="Ikeo K."/>
            <person name="Iwama A."/>
            <person name="Ishikawa T."/>
            <person name="Jakt M."/>
            <person name="Kanapin A."/>
            <person name="Katoh M."/>
            <person name="Kawasawa Y."/>
            <person name="Kelso J."/>
            <person name="Kitamura H."/>
            <person name="Kitano H."/>
            <person name="Kollias G."/>
            <person name="Krishnan S.P."/>
            <person name="Kruger A."/>
            <person name="Kummerfeld S.K."/>
            <person name="Kurochkin I.V."/>
            <person name="Lareau L.F."/>
            <person name="Lazarevic D."/>
            <person name="Lipovich L."/>
            <person name="Liu J."/>
            <person name="Liuni S."/>
            <person name="McWilliam S."/>
            <person name="Madan Babu M."/>
            <person name="Madera M."/>
            <person name="Marchionni L."/>
            <person name="Matsuda H."/>
            <person name="Matsuzawa S."/>
            <person name="Miki H."/>
            <person name="Mignone F."/>
            <person name="Miyake S."/>
            <person name="Morris K."/>
            <person name="Mottagui-Tabar S."/>
            <person name="Mulder N."/>
            <person name="Nakano N."/>
            <person name="Nakauchi H."/>
            <person name="Ng P."/>
            <person name="Nilsson R."/>
            <person name="Nishiguchi S."/>
            <person name="Nishikawa S."/>
            <person name="Nori F."/>
            <person name="Ohara O."/>
            <person name="Okazaki Y."/>
            <person name="Orlando V."/>
            <person name="Pang K.C."/>
            <person name="Pavan W.J."/>
            <person name="Pavesi G."/>
            <person name="Pesole G."/>
            <person name="Petrovsky N."/>
            <person name="Piazza S."/>
            <person name="Reed J."/>
            <person name="Reid J.F."/>
            <person name="Ring B.Z."/>
            <person name="Ringwald M."/>
            <person name="Rost B."/>
            <person name="Ruan Y."/>
            <person name="Salzberg S.L."/>
            <person name="Sandelin A."/>
            <person name="Schneider C."/>
            <person name="Schoenbach C."/>
            <person name="Sekiguchi K."/>
            <person name="Semple C.A."/>
            <person name="Seno S."/>
            <person name="Sessa L."/>
            <person name="Sheng Y."/>
            <person name="Shibata Y."/>
            <person name="Shimada H."/>
            <person name="Shimada K."/>
            <person name="Silva D."/>
            <person name="Sinclair B."/>
            <person name="Sperling S."/>
            <person name="Stupka E."/>
            <person name="Sugiura K."/>
            <person name="Sultana R."/>
            <person name="Takenaka Y."/>
            <person name="Taki K."/>
            <person name="Tammoja K."/>
            <person name="Tan S.L."/>
            <person name="Tang S."/>
            <person name="Taylor M.S."/>
            <person name="Tegner J."/>
            <person name="Teichmann S.A."/>
            <person name="Ueda H.R."/>
            <person name="van Nimwegen E."/>
            <person name="Verardo R."/>
            <person name="Wei C.L."/>
            <person name="Yagi K."/>
            <person name="Yamanishi H."/>
            <person name="Zabarovsky E."/>
            <person name="Zhu S."/>
            <person name="Zimmer A."/>
            <person name="Hide W."/>
            <person name="Bult C."/>
            <person name="Grimmond S.M."/>
            <person name="Teasdale R.D."/>
            <person name="Liu E.T."/>
            <person name="Brusic V."/>
            <person name="Quackenbush J."/>
            <person name="Wahlestedt C."/>
            <person name="Mattick J.S."/>
            <person name="Hume D.A."/>
            <person name="Kai C."/>
            <person name="Sasaki D."/>
            <person name="Tomaru Y."/>
            <person name="Fukuda S."/>
            <person name="Kanamori-Katayama M."/>
            <person name="Suzuki M."/>
            <person name="Aoki J."/>
            <person name="Arakawa T."/>
            <person name="Iida J."/>
            <person name="Imamura K."/>
            <person name="Itoh M."/>
            <person name="Kato T."/>
            <person name="Kawaji H."/>
            <person name="Kawagashira N."/>
            <person name="Kawashima T."/>
            <person name="Kojima M."/>
            <person name="Kondo S."/>
            <person name="Konno H."/>
            <person name="Nakano K."/>
            <person name="Ninomiya N."/>
            <person name="Nishio T."/>
            <person name="Okada M."/>
            <person name="Plessy C."/>
            <person name="Shibata K."/>
            <person name="Shiraki T."/>
            <person name="Suzuki S."/>
            <person name="Tagami M."/>
            <person name="Waki K."/>
            <person name="Watahiki A."/>
            <person name="Okamura-Oho Y."/>
            <person name="Suzuki H."/>
            <person name="Kawai J."/>
            <person name="Hayashizaki Y."/>
        </authorList>
    </citation>
    <scope>NUCLEOTIDE SEQUENCE [LARGE SCALE MRNA]</scope>
    <source>
        <strain>C57BL/6J</strain>
        <tissue>Hippocampus</tissue>
        <tissue>Tongue</tissue>
        <tissue>Visual cortex</tissue>
    </source>
</reference>
<reference key="2">
    <citation type="journal article" date="2004" name="Genome Res.">
        <title>The status, quality, and expansion of the NIH full-length cDNA project: the Mammalian Gene Collection (MGC).</title>
        <authorList>
            <consortium name="The MGC Project Team"/>
        </authorList>
    </citation>
    <scope>NUCLEOTIDE SEQUENCE [LARGE SCALE MRNA]</scope>
    <source>
        <strain>Czech II</strain>
        <tissue>Mammary tumor</tissue>
    </source>
</reference>
<reference key="3">
    <citation type="journal article" date="2010" name="Cell">
        <title>A tissue-specific atlas of mouse protein phosphorylation and expression.</title>
        <authorList>
            <person name="Huttlin E.L."/>
            <person name="Jedrychowski M.P."/>
            <person name="Elias J.E."/>
            <person name="Goswami T."/>
            <person name="Rad R."/>
            <person name="Beausoleil S.A."/>
            <person name="Villen J."/>
            <person name="Haas W."/>
            <person name="Sowa M.E."/>
            <person name="Gygi S.P."/>
        </authorList>
    </citation>
    <scope>IDENTIFICATION BY MASS SPECTROMETRY [LARGE SCALE ANALYSIS]</scope>
    <source>
        <tissue>Brain</tissue>
        <tissue>Spleen</tissue>
        <tissue>Testis</tissue>
    </source>
</reference>
<organism>
    <name type="scientific">Mus musculus</name>
    <name type="common">Mouse</name>
    <dbReference type="NCBI Taxonomy" id="10090"/>
    <lineage>
        <taxon>Eukaryota</taxon>
        <taxon>Metazoa</taxon>
        <taxon>Chordata</taxon>
        <taxon>Craniata</taxon>
        <taxon>Vertebrata</taxon>
        <taxon>Euteleostomi</taxon>
        <taxon>Mammalia</taxon>
        <taxon>Eutheria</taxon>
        <taxon>Euarchontoglires</taxon>
        <taxon>Glires</taxon>
        <taxon>Rodentia</taxon>
        <taxon>Myomorpha</taxon>
        <taxon>Muroidea</taxon>
        <taxon>Muridae</taxon>
        <taxon>Murinae</taxon>
        <taxon>Mus</taxon>
        <taxon>Mus</taxon>
    </lineage>
</organism>